<sequence length="209" mass="23918">MKNPIINNIPCVLLAGGKSSRFIINNIPINKALMPLKSYPSLLEYQYTRLLKLFKQVIISAKKSYELNAPYLLEKEGGLFSPLFGIHNAFLTLQTPYIFFIAIDTPLVSFESIKILCGIQNFSVVYAKSPTKEHYLISLWHQSILNALNYTLKTQNYRLSDLIKNASSTAIHFDKEEEFLNLNTLKDYELAVQILKEGSNGRRRKDRTP</sequence>
<comment type="function">
    <text evidence="1">Transfers a GMP moiety from GTP to Mo-molybdopterin (Mo-MPT) cofactor (Moco or molybdenum cofactor) to form Mo-molybdopterin guanine dinucleotide (Mo-MGD) cofactor.</text>
</comment>
<comment type="catalytic activity">
    <reaction evidence="1">
        <text>Mo-molybdopterin + GTP + H(+) = Mo-molybdopterin guanine dinucleotide + diphosphate</text>
        <dbReference type="Rhea" id="RHEA:34243"/>
        <dbReference type="ChEBI" id="CHEBI:15378"/>
        <dbReference type="ChEBI" id="CHEBI:33019"/>
        <dbReference type="ChEBI" id="CHEBI:37565"/>
        <dbReference type="ChEBI" id="CHEBI:71302"/>
        <dbReference type="ChEBI" id="CHEBI:71310"/>
        <dbReference type="EC" id="2.7.7.77"/>
    </reaction>
</comment>
<comment type="cofactor">
    <cofactor evidence="1">
        <name>Mg(2+)</name>
        <dbReference type="ChEBI" id="CHEBI:18420"/>
    </cofactor>
</comment>
<comment type="subunit">
    <text evidence="1">Monomer.</text>
</comment>
<comment type="subcellular location">
    <subcellularLocation>
        <location evidence="1">Cytoplasm</location>
    </subcellularLocation>
</comment>
<comment type="domain">
    <text evidence="1">The N-terminal domain determines nucleotide recognition and specific binding, while the C-terminal domain determines the specific binding to the target protein.</text>
</comment>
<comment type="similarity">
    <text evidence="1">Belongs to the MobA family.</text>
</comment>
<feature type="chain" id="PRO_0000134893" description="Molybdenum cofactor guanylyltransferase">
    <location>
        <begin position="1"/>
        <end position="209"/>
    </location>
</feature>
<feature type="binding site" evidence="1">
    <location>
        <begin position="14"/>
        <end position="16"/>
    </location>
    <ligand>
        <name>GTP</name>
        <dbReference type="ChEBI" id="CHEBI:37565"/>
    </ligand>
</feature>
<feature type="binding site" evidence="1">
    <location>
        <position position="31"/>
    </location>
    <ligand>
        <name>GTP</name>
        <dbReference type="ChEBI" id="CHEBI:37565"/>
    </ligand>
</feature>
<feature type="binding site" evidence="1">
    <location>
        <position position="104"/>
    </location>
    <ligand>
        <name>GTP</name>
        <dbReference type="ChEBI" id="CHEBI:37565"/>
    </ligand>
</feature>
<feature type="binding site" evidence="1">
    <location>
        <position position="104"/>
    </location>
    <ligand>
        <name>Mg(2+)</name>
        <dbReference type="ChEBI" id="CHEBI:18420"/>
    </ligand>
</feature>
<keyword id="KW-0963">Cytoplasm</keyword>
<keyword id="KW-0342">GTP-binding</keyword>
<keyword id="KW-0460">Magnesium</keyword>
<keyword id="KW-0479">Metal-binding</keyword>
<keyword id="KW-0501">Molybdenum cofactor biosynthesis</keyword>
<keyword id="KW-0547">Nucleotide-binding</keyword>
<keyword id="KW-0808">Transferase</keyword>
<name>MOBA_HELPJ</name>
<organism>
    <name type="scientific">Helicobacter pylori (strain J99 / ATCC 700824)</name>
    <name type="common">Campylobacter pylori J99</name>
    <dbReference type="NCBI Taxonomy" id="85963"/>
    <lineage>
        <taxon>Bacteria</taxon>
        <taxon>Pseudomonadati</taxon>
        <taxon>Campylobacterota</taxon>
        <taxon>Epsilonproteobacteria</taxon>
        <taxon>Campylobacterales</taxon>
        <taxon>Helicobacteraceae</taxon>
        <taxon>Helicobacter</taxon>
    </lineage>
</organism>
<proteinExistence type="inferred from homology"/>
<accession>Q9ZL74</accession>
<gene>
    <name evidence="1" type="primary">mobA</name>
    <name type="ordered locus">jhp_0706</name>
</gene>
<protein>
    <recommendedName>
        <fullName evidence="1">Molybdenum cofactor guanylyltransferase</fullName>
        <shortName evidence="1">MoCo guanylyltransferase</shortName>
        <ecNumber evidence="1">2.7.7.77</ecNumber>
    </recommendedName>
    <alternativeName>
        <fullName evidence="1">GTP:molybdopterin guanylyltransferase</fullName>
    </alternativeName>
    <alternativeName>
        <fullName evidence="1">Mo-MPT guanylyltransferase</fullName>
    </alternativeName>
    <alternativeName>
        <fullName evidence="1">Molybdopterin guanylyltransferase</fullName>
    </alternativeName>
    <alternativeName>
        <fullName evidence="1">Molybdopterin-guanine dinucleotide synthase</fullName>
        <shortName evidence="1">MGD synthase</shortName>
    </alternativeName>
</protein>
<evidence type="ECO:0000255" key="1">
    <source>
        <dbReference type="HAMAP-Rule" id="MF_00316"/>
    </source>
</evidence>
<reference key="1">
    <citation type="journal article" date="1999" name="Nature">
        <title>Genomic sequence comparison of two unrelated isolates of the human gastric pathogen Helicobacter pylori.</title>
        <authorList>
            <person name="Alm R.A."/>
            <person name="Ling L.-S.L."/>
            <person name="Moir D.T."/>
            <person name="King B.L."/>
            <person name="Brown E.D."/>
            <person name="Doig P.C."/>
            <person name="Smith D.R."/>
            <person name="Noonan B."/>
            <person name="Guild B.C."/>
            <person name="deJonge B.L."/>
            <person name="Carmel G."/>
            <person name="Tummino P.J."/>
            <person name="Caruso A."/>
            <person name="Uria-Nickelsen M."/>
            <person name="Mills D.M."/>
            <person name="Ives C."/>
            <person name="Gibson R."/>
            <person name="Merberg D."/>
            <person name="Mills S.D."/>
            <person name="Jiang Q."/>
            <person name="Taylor D.E."/>
            <person name="Vovis G.F."/>
            <person name="Trust T.J."/>
        </authorList>
    </citation>
    <scope>NUCLEOTIDE SEQUENCE [LARGE SCALE GENOMIC DNA]</scope>
    <source>
        <strain>J99 / ATCC 700824</strain>
    </source>
</reference>
<dbReference type="EC" id="2.7.7.77" evidence="1"/>
<dbReference type="EMBL" id="AE001439">
    <property type="protein sequence ID" value="AAD06291.1"/>
    <property type="molecule type" value="Genomic_DNA"/>
</dbReference>
<dbReference type="PIR" id="E71897">
    <property type="entry name" value="E71897"/>
</dbReference>
<dbReference type="RefSeq" id="WP_000795345.1">
    <property type="nucleotide sequence ID" value="NC_000921.1"/>
</dbReference>
<dbReference type="SMR" id="Q9ZL74"/>
<dbReference type="KEGG" id="hpj:jhp_0706"/>
<dbReference type="PATRIC" id="fig|85963.30.peg.271"/>
<dbReference type="eggNOG" id="COG0746">
    <property type="taxonomic scope" value="Bacteria"/>
</dbReference>
<dbReference type="Proteomes" id="UP000000804">
    <property type="component" value="Chromosome"/>
</dbReference>
<dbReference type="GO" id="GO:0005737">
    <property type="term" value="C:cytoplasm"/>
    <property type="evidence" value="ECO:0007669"/>
    <property type="project" value="UniProtKB-SubCell"/>
</dbReference>
<dbReference type="GO" id="GO:0005525">
    <property type="term" value="F:GTP binding"/>
    <property type="evidence" value="ECO:0007669"/>
    <property type="project" value="UniProtKB-UniRule"/>
</dbReference>
<dbReference type="GO" id="GO:0046872">
    <property type="term" value="F:metal ion binding"/>
    <property type="evidence" value="ECO:0007669"/>
    <property type="project" value="UniProtKB-KW"/>
</dbReference>
<dbReference type="GO" id="GO:0061603">
    <property type="term" value="F:molybdenum cofactor guanylyltransferase activity"/>
    <property type="evidence" value="ECO:0007669"/>
    <property type="project" value="UniProtKB-EC"/>
</dbReference>
<dbReference type="GO" id="GO:1902758">
    <property type="term" value="P:bis(molybdopterin guanine dinucleotide)molybdenum biosynthetic process"/>
    <property type="evidence" value="ECO:0007669"/>
    <property type="project" value="TreeGrafter"/>
</dbReference>
<dbReference type="CDD" id="cd02503">
    <property type="entry name" value="MobA"/>
    <property type="match status" value="1"/>
</dbReference>
<dbReference type="Gene3D" id="3.90.550.10">
    <property type="entry name" value="Spore Coat Polysaccharide Biosynthesis Protein SpsA, Chain A"/>
    <property type="match status" value="1"/>
</dbReference>
<dbReference type="HAMAP" id="MF_00316">
    <property type="entry name" value="MobA"/>
    <property type="match status" value="1"/>
</dbReference>
<dbReference type="InterPro" id="IPR025877">
    <property type="entry name" value="MobA-like_NTP_Trfase"/>
</dbReference>
<dbReference type="InterPro" id="IPR013482">
    <property type="entry name" value="Molybde_CF_guanTrfase"/>
</dbReference>
<dbReference type="InterPro" id="IPR029044">
    <property type="entry name" value="Nucleotide-diphossugar_trans"/>
</dbReference>
<dbReference type="NCBIfam" id="NF001837">
    <property type="entry name" value="PRK00560.1"/>
    <property type="match status" value="1"/>
</dbReference>
<dbReference type="PANTHER" id="PTHR19136">
    <property type="entry name" value="MOLYBDENUM COFACTOR GUANYLYLTRANSFERASE"/>
    <property type="match status" value="1"/>
</dbReference>
<dbReference type="PANTHER" id="PTHR19136:SF81">
    <property type="entry name" value="MOLYBDENUM COFACTOR GUANYLYLTRANSFERASE"/>
    <property type="match status" value="1"/>
</dbReference>
<dbReference type="Pfam" id="PF12804">
    <property type="entry name" value="NTP_transf_3"/>
    <property type="match status" value="1"/>
</dbReference>
<dbReference type="SUPFAM" id="SSF53448">
    <property type="entry name" value="Nucleotide-diphospho-sugar transferases"/>
    <property type="match status" value="1"/>
</dbReference>